<reference key="1">
    <citation type="submission" date="2008-04" db="EMBL/GenBank/DDBJ databases">
        <title>Complete sequence of Yersinia pseudotuberculosis PB1/+.</title>
        <authorList>
            <person name="Copeland A."/>
            <person name="Lucas S."/>
            <person name="Lapidus A."/>
            <person name="Glavina del Rio T."/>
            <person name="Dalin E."/>
            <person name="Tice H."/>
            <person name="Bruce D."/>
            <person name="Goodwin L."/>
            <person name="Pitluck S."/>
            <person name="Munk A.C."/>
            <person name="Brettin T."/>
            <person name="Detter J.C."/>
            <person name="Han C."/>
            <person name="Tapia R."/>
            <person name="Schmutz J."/>
            <person name="Larimer F."/>
            <person name="Land M."/>
            <person name="Hauser L."/>
            <person name="Challacombe J.F."/>
            <person name="Green L."/>
            <person name="Lindler L.E."/>
            <person name="Nikolich M.P."/>
            <person name="Richardson P."/>
        </authorList>
    </citation>
    <scope>NUCLEOTIDE SEQUENCE [LARGE SCALE GENOMIC DNA]</scope>
    <source>
        <strain>PB1/+</strain>
    </source>
</reference>
<feature type="chain" id="PRO_1000136134" description="Glycerol-3-phosphate acyltransferase">
    <location>
        <begin position="1"/>
        <end position="216"/>
    </location>
</feature>
<feature type="transmembrane region" description="Helical" evidence="1">
    <location>
        <begin position="4"/>
        <end position="24"/>
    </location>
</feature>
<feature type="transmembrane region" description="Helical" evidence="1">
    <location>
        <begin position="56"/>
        <end position="76"/>
    </location>
</feature>
<feature type="transmembrane region" description="Helical" evidence="1">
    <location>
        <begin position="80"/>
        <end position="100"/>
    </location>
</feature>
<feature type="transmembrane region" description="Helical" evidence="1">
    <location>
        <begin position="112"/>
        <end position="132"/>
    </location>
</feature>
<feature type="transmembrane region" description="Helical" evidence="1">
    <location>
        <begin position="138"/>
        <end position="158"/>
    </location>
</feature>
<comment type="function">
    <text evidence="1">Catalyzes the transfer of an acyl group from acyl-phosphate (acyl-PO(4)) to glycerol-3-phosphate (G3P) to form lysophosphatidic acid (LPA). This enzyme utilizes acyl-phosphate as fatty acyl donor, but not acyl-CoA or acyl-ACP.</text>
</comment>
<comment type="catalytic activity">
    <reaction evidence="1">
        <text>an acyl phosphate + sn-glycerol 3-phosphate = a 1-acyl-sn-glycero-3-phosphate + phosphate</text>
        <dbReference type="Rhea" id="RHEA:34075"/>
        <dbReference type="ChEBI" id="CHEBI:43474"/>
        <dbReference type="ChEBI" id="CHEBI:57597"/>
        <dbReference type="ChEBI" id="CHEBI:57970"/>
        <dbReference type="ChEBI" id="CHEBI:59918"/>
        <dbReference type="EC" id="2.3.1.275"/>
    </reaction>
</comment>
<comment type="pathway">
    <text evidence="1">Lipid metabolism; phospholipid metabolism.</text>
</comment>
<comment type="subunit">
    <text evidence="1">Probably interacts with PlsX.</text>
</comment>
<comment type="subcellular location">
    <subcellularLocation>
        <location evidence="1">Cell inner membrane</location>
        <topology evidence="1">Multi-pass membrane protein</topology>
    </subcellularLocation>
</comment>
<comment type="similarity">
    <text evidence="1">Belongs to the PlsY family.</text>
</comment>
<evidence type="ECO:0000255" key="1">
    <source>
        <dbReference type="HAMAP-Rule" id="MF_01043"/>
    </source>
</evidence>
<protein>
    <recommendedName>
        <fullName evidence="1">Glycerol-3-phosphate acyltransferase</fullName>
    </recommendedName>
    <alternativeName>
        <fullName evidence="1">Acyl-PO4 G3P acyltransferase</fullName>
    </alternativeName>
    <alternativeName>
        <fullName evidence="1">Acyl-phosphate--glycerol-3-phosphate acyltransferase</fullName>
    </alternativeName>
    <alternativeName>
        <fullName evidence="1">G3P acyltransferase</fullName>
        <shortName evidence="1">GPAT</shortName>
        <ecNumber evidence="1">2.3.1.275</ecNumber>
    </alternativeName>
    <alternativeName>
        <fullName evidence="1">Lysophosphatidic acid synthase</fullName>
        <shortName evidence="1">LPA synthase</shortName>
    </alternativeName>
</protein>
<proteinExistence type="inferred from homology"/>
<keyword id="KW-0997">Cell inner membrane</keyword>
<keyword id="KW-1003">Cell membrane</keyword>
<keyword id="KW-0444">Lipid biosynthesis</keyword>
<keyword id="KW-0443">Lipid metabolism</keyword>
<keyword id="KW-0472">Membrane</keyword>
<keyword id="KW-0594">Phospholipid biosynthesis</keyword>
<keyword id="KW-1208">Phospholipid metabolism</keyword>
<keyword id="KW-0808">Transferase</keyword>
<keyword id="KW-0812">Transmembrane</keyword>
<keyword id="KW-1133">Transmembrane helix</keyword>
<organism>
    <name type="scientific">Yersinia pseudotuberculosis serotype IB (strain PB1/+)</name>
    <dbReference type="NCBI Taxonomy" id="502801"/>
    <lineage>
        <taxon>Bacteria</taxon>
        <taxon>Pseudomonadati</taxon>
        <taxon>Pseudomonadota</taxon>
        <taxon>Gammaproteobacteria</taxon>
        <taxon>Enterobacterales</taxon>
        <taxon>Yersiniaceae</taxon>
        <taxon>Yersinia</taxon>
    </lineage>
</organism>
<gene>
    <name evidence="1" type="primary">plsY</name>
    <name type="ordered locus">YPTS_3558</name>
</gene>
<accession>B2K2I2</accession>
<sequence>MSAIALGMIIFAYLCGSISSAILVCRVARLPDPRTHGSGNPGATNVLRIGGRTAAVAVLLFDILKGMLPVWIAYLLHIPPLYLGLTAIAACLGHIYPVFFHFKGGKGVATAFGAIAPIGWDLTGLMTGTWLLTVLLSGYSSLGAIVSALIAPFYVWWFKPQFTFPVAMLSCLILMRHHDNIQRLWRGKEGKIWDKLRKKKQKTPAEEAAELEEKED</sequence>
<dbReference type="EC" id="2.3.1.275" evidence="1"/>
<dbReference type="EMBL" id="CP001048">
    <property type="protein sequence ID" value="ACC90511.1"/>
    <property type="molecule type" value="Genomic_DNA"/>
</dbReference>
<dbReference type="RefSeq" id="WP_002217581.1">
    <property type="nucleotide sequence ID" value="NZ_CP009780.1"/>
</dbReference>
<dbReference type="SMR" id="B2K2I2"/>
<dbReference type="GeneID" id="57973977"/>
<dbReference type="KEGG" id="ypb:YPTS_3558"/>
<dbReference type="PATRIC" id="fig|502801.10.peg.3005"/>
<dbReference type="UniPathway" id="UPA00085"/>
<dbReference type="GO" id="GO:0005886">
    <property type="term" value="C:plasma membrane"/>
    <property type="evidence" value="ECO:0007669"/>
    <property type="project" value="UniProtKB-SubCell"/>
</dbReference>
<dbReference type="GO" id="GO:0043772">
    <property type="term" value="F:acyl-phosphate glycerol-3-phosphate acyltransferase activity"/>
    <property type="evidence" value="ECO:0007669"/>
    <property type="project" value="UniProtKB-UniRule"/>
</dbReference>
<dbReference type="GO" id="GO:0008654">
    <property type="term" value="P:phospholipid biosynthetic process"/>
    <property type="evidence" value="ECO:0007669"/>
    <property type="project" value="UniProtKB-UniRule"/>
</dbReference>
<dbReference type="HAMAP" id="MF_01043">
    <property type="entry name" value="PlsY"/>
    <property type="match status" value="1"/>
</dbReference>
<dbReference type="InterPro" id="IPR003811">
    <property type="entry name" value="G3P_acylTferase_PlsY"/>
</dbReference>
<dbReference type="NCBIfam" id="TIGR00023">
    <property type="entry name" value="glycerol-3-phosphate 1-O-acyltransferase PlsY"/>
    <property type="match status" value="1"/>
</dbReference>
<dbReference type="PANTHER" id="PTHR30309:SF0">
    <property type="entry name" value="GLYCEROL-3-PHOSPHATE ACYLTRANSFERASE-RELATED"/>
    <property type="match status" value="1"/>
</dbReference>
<dbReference type="PANTHER" id="PTHR30309">
    <property type="entry name" value="INNER MEMBRANE PROTEIN YGIH"/>
    <property type="match status" value="1"/>
</dbReference>
<dbReference type="Pfam" id="PF02660">
    <property type="entry name" value="G3P_acyltransf"/>
    <property type="match status" value="1"/>
</dbReference>
<dbReference type="SMART" id="SM01207">
    <property type="entry name" value="G3P_acyltransf"/>
    <property type="match status" value="1"/>
</dbReference>
<name>PLSY_YERPB</name>